<feature type="chain" id="PRO_1000124931" description="GTP cyclohydrolase 1">
    <location>
        <begin position="1"/>
        <end position="184"/>
    </location>
</feature>
<feature type="binding site" evidence="1">
    <location>
        <position position="75"/>
    </location>
    <ligand>
        <name>Zn(2+)</name>
        <dbReference type="ChEBI" id="CHEBI:29105"/>
    </ligand>
</feature>
<feature type="binding site" evidence="1">
    <location>
        <position position="78"/>
    </location>
    <ligand>
        <name>Zn(2+)</name>
        <dbReference type="ChEBI" id="CHEBI:29105"/>
    </ligand>
</feature>
<feature type="binding site" evidence="1">
    <location>
        <position position="146"/>
    </location>
    <ligand>
        <name>Zn(2+)</name>
        <dbReference type="ChEBI" id="CHEBI:29105"/>
    </ligand>
</feature>
<proteinExistence type="inferred from homology"/>
<reference key="1">
    <citation type="journal article" date="2010" name="Genome Biol.">
        <title>Structure and dynamics of the pan-genome of Streptococcus pneumoniae and closely related species.</title>
        <authorList>
            <person name="Donati C."/>
            <person name="Hiller N.L."/>
            <person name="Tettelin H."/>
            <person name="Muzzi A."/>
            <person name="Croucher N.J."/>
            <person name="Angiuoli S.V."/>
            <person name="Oggioni M."/>
            <person name="Dunning Hotopp J.C."/>
            <person name="Hu F.Z."/>
            <person name="Riley D.R."/>
            <person name="Covacci A."/>
            <person name="Mitchell T.J."/>
            <person name="Bentley S.D."/>
            <person name="Kilian M."/>
            <person name="Ehrlich G.D."/>
            <person name="Rappuoli R."/>
            <person name="Moxon E.R."/>
            <person name="Masignani V."/>
        </authorList>
    </citation>
    <scope>NUCLEOTIDE SEQUENCE [LARGE SCALE GENOMIC DNA]</scope>
    <source>
        <strain>P1031</strain>
    </source>
</reference>
<dbReference type="EC" id="3.5.4.16" evidence="1"/>
<dbReference type="EMBL" id="CP000920">
    <property type="protein sequence ID" value="ACO21099.1"/>
    <property type="molecule type" value="Genomic_DNA"/>
</dbReference>
<dbReference type="RefSeq" id="WP_000380924.1">
    <property type="nucleotide sequence ID" value="NC_012467.1"/>
</dbReference>
<dbReference type="SMR" id="C1CIH2"/>
<dbReference type="GeneID" id="45652233"/>
<dbReference type="KEGG" id="spp:SPP_0341"/>
<dbReference type="HOGENOM" id="CLU_049768_3_3_9"/>
<dbReference type="UniPathway" id="UPA00848">
    <property type="reaction ID" value="UER00151"/>
</dbReference>
<dbReference type="GO" id="GO:0005737">
    <property type="term" value="C:cytoplasm"/>
    <property type="evidence" value="ECO:0007669"/>
    <property type="project" value="TreeGrafter"/>
</dbReference>
<dbReference type="GO" id="GO:0005525">
    <property type="term" value="F:GTP binding"/>
    <property type="evidence" value="ECO:0007669"/>
    <property type="project" value="UniProtKB-KW"/>
</dbReference>
<dbReference type="GO" id="GO:0003934">
    <property type="term" value="F:GTP cyclohydrolase I activity"/>
    <property type="evidence" value="ECO:0007669"/>
    <property type="project" value="UniProtKB-UniRule"/>
</dbReference>
<dbReference type="GO" id="GO:0008270">
    <property type="term" value="F:zinc ion binding"/>
    <property type="evidence" value="ECO:0007669"/>
    <property type="project" value="UniProtKB-UniRule"/>
</dbReference>
<dbReference type="GO" id="GO:0006730">
    <property type="term" value="P:one-carbon metabolic process"/>
    <property type="evidence" value="ECO:0007669"/>
    <property type="project" value="UniProtKB-UniRule"/>
</dbReference>
<dbReference type="GO" id="GO:0006729">
    <property type="term" value="P:tetrahydrobiopterin biosynthetic process"/>
    <property type="evidence" value="ECO:0007669"/>
    <property type="project" value="TreeGrafter"/>
</dbReference>
<dbReference type="GO" id="GO:0046654">
    <property type="term" value="P:tetrahydrofolate biosynthetic process"/>
    <property type="evidence" value="ECO:0007669"/>
    <property type="project" value="UniProtKB-UniRule"/>
</dbReference>
<dbReference type="CDD" id="cd00642">
    <property type="entry name" value="GTP_cyclohydro1"/>
    <property type="match status" value="1"/>
</dbReference>
<dbReference type="FunFam" id="1.10.286.10:FF:000001">
    <property type="entry name" value="GTP cyclohydrolase 1"/>
    <property type="match status" value="1"/>
</dbReference>
<dbReference type="FunFam" id="3.30.1130.10:FF:000001">
    <property type="entry name" value="GTP cyclohydrolase 1"/>
    <property type="match status" value="1"/>
</dbReference>
<dbReference type="Gene3D" id="1.10.286.10">
    <property type="match status" value="1"/>
</dbReference>
<dbReference type="Gene3D" id="3.30.1130.10">
    <property type="match status" value="1"/>
</dbReference>
<dbReference type="HAMAP" id="MF_00223">
    <property type="entry name" value="FolE"/>
    <property type="match status" value="1"/>
</dbReference>
<dbReference type="InterPro" id="IPR043133">
    <property type="entry name" value="GTP-CH-I_C/QueF"/>
</dbReference>
<dbReference type="InterPro" id="IPR043134">
    <property type="entry name" value="GTP-CH-I_N"/>
</dbReference>
<dbReference type="InterPro" id="IPR001474">
    <property type="entry name" value="GTP_CycHdrlase_I"/>
</dbReference>
<dbReference type="InterPro" id="IPR018234">
    <property type="entry name" value="GTP_CycHdrlase_I_CS"/>
</dbReference>
<dbReference type="InterPro" id="IPR020602">
    <property type="entry name" value="GTP_CycHdrlase_I_dom"/>
</dbReference>
<dbReference type="NCBIfam" id="TIGR00063">
    <property type="entry name" value="folE"/>
    <property type="match status" value="1"/>
</dbReference>
<dbReference type="NCBIfam" id="NF006825">
    <property type="entry name" value="PRK09347.1-2"/>
    <property type="match status" value="1"/>
</dbReference>
<dbReference type="NCBIfam" id="NF006826">
    <property type="entry name" value="PRK09347.1-3"/>
    <property type="match status" value="1"/>
</dbReference>
<dbReference type="PANTHER" id="PTHR11109:SF7">
    <property type="entry name" value="GTP CYCLOHYDROLASE 1"/>
    <property type="match status" value="1"/>
</dbReference>
<dbReference type="PANTHER" id="PTHR11109">
    <property type="entry name" value="GTP CYCLOHYDROLASE I"/>
    <property type="match status" value="1"/>
</dbReference>
<dbReference type="Pfam" id="PF01227">
    <property type="entry name" value="GTP_cyclohydroI"/>
    <property type="match status" value="1"/>
</dbReference>
<dbReference type="SUPFAM" id="SSF55620">
    <property type="entry name" value="Tetrahydrobiopterin biosynthesis enzymes-like"/>
    <property type="match status" value="1"/>
</dbReference>
<dbReference type="PROSITE" id="PS00859">
    <property type="entry name" value="GTP_CYCLOHYDROL_1_1"/>
    <property type="match status" value="1"/>
</dbReference>
<dbReference type="PROSITE" id="PS00860">
    <property type="entry name" value="GTP_CYCLOHYDROL_1_2"/>
    <property type="match status" value="1"/>
</dbReference>
<keyword id="KW-0342">GTP-binding</keyword>
<keyword id="KW-0378">Hydrolase</keyword>
<keyword id="KW-0479">Metal-binding</keyword>
<keyword id="KW-0547">Nucleotide-binding</keyword>
<keyword id="KW-0554">One-carbon metabolism</keyword>
<keyword id="KW-0862">Zinc</keyword>
<comment type="catalytic activity">
    <reaction evidence="1">
        <text>GTP + H2O = 7,8-dihydroneopterin 3'-triphosphate + formate + H(+)</text>
        <dbReference type="Rhea" id="RHEA:17473"/>
        <dbReference type="ChEBI" id="CHEBI:15377"/>
        <dbReference type="ChEBI" id="CHEBI:15378"/>
        <dbReference type="ChEBI" id="CHEBI:15740"/>
        <dbReference type="ChEBI" id="CHEBI:37565"/>
        <dbReference type="ChEBI" id="CHEBI:58462"/>
        <dbReference type="EC" id="3.5.4.16"/>
    </reaction>
</comment>
<comment type="pathway">
    <text evidence="1">Cofactor biosynthesis; 7,8-dihydroneopterin triphosphate biosynthesis; 7,8-dihydroneopterin triphosphate from GTP: step 1/1.</text>
</comment>
<comment type="subunit">
    <text evidence="1">Homomer.</text>
</comment>
<comment type="similarity">
    <text evidence="1">Belongs to the GTP cyclohydrolase I family.</text>
</comment>
<accession>C1CIH2</accession>
<name>GCH1_STRZP</name>
<protein>
    <recommendedName>
        <fullName evidence="1">GTP cyclohydrolase 1</fullName>
        <ecNumber evidence="1">3.5.4.16</ecNumber>
    </recommendedName>
    <alternativeName>
        <fullName evidence="1">GTP cyclohydrolase I</fullName>
        <shortName evidence="1">GTP-CH-I</shortName>
    </alternativeName>
</protein>
<gene>
    <name evidence="1" type="primary">folE</name>
    <name type="ordered locus">SPP_0341</name>
</gene>
<organism>
    <name type="scientific">Streptococcus pneumoniae (strain P1031)</name>
    <dbReference type="NCBI Taxonomy" id="488223"/>
    <lineage>
        <taxon>Bacteria</taxon>
        <taxon>Bacillati</taxon>
        <taxon>Bacillota</taxon>
        <taxon>Bacilli</taxon>
        <taxon>Lactobacillales</taxon>
        <taxon>Streptococcaceae</taxon>
        <taxon>Streptococcus</taxon>
    </lineage>
</organism>
<evidence type="ECO:0000255" key="1">
    <source>
        <dbReference type="HAMAP-Rule" id="MF_00223"/>
    </source>
</evidence>
<sequence length="184" mass="20713">MDTQKIEAAVKMIIEAVGENANREGLQETPARVARMYQEIFSGLGQTAEEHLSKSFEIIDDNMVVEKDIFFHTMCEHHFLPFYGRAHIAYIPDGRVAGLSKLARTVEVYSKKPQIQERLNIEVADALMDYLGAKGAFVVIEAEHMCMSMRGVRKPGTATLTTVARGLFETDKDLRDQAYRLMGL</sequence>